<organism>
    <name type="scientific">Acinetobacter baumannii (strain SDF)</name>
    <dbReference type="NCBI Taxonomy" id="509170"/>
    <lineage>
        <taxon>Bacteria</taxon>
        <taxon>Pseudomonadati</taxon>
        <taxon>Pseudomonadota</taxon>
        <taxon>Gammaproteobacteria</taxon>
        <taxon>Moraxellales</taxon>
        <taxon>Moraxellaceae</taxon>
        <taxon>Acinetobacter</taxon>
        <taxon>Acinetobacter calcoaceticus/baumannii complex</taxon>
    </lineage>
</organism>
<protein>
    <recommendedName>
        <fullName evidence="1">Undecaprenyl-diphosphatase</fullName>
        <ecNumber evidence="1">3.6.1.27</ecNumber>
    </recommendedName>
    <alternativeName>
        <fullName evidence="1">Bacitracin resistance protein</fullName>
    </alternativeName>
    <alternativeName>
        <fullName evidence="1">Undecaprenyl pyrophosphate phosphatase</fullName>
    </alternativeName>
</protein>
<proteinExistence type="inferred from homology"/>
<evidence type="ECO:0000255" key="1">
    <source>
        <dbReference type="HAMAP-Rule" id="MF_01006"/>
    </source>
</evidence>
<sequence>MENFEVIKALFLGFVEGLTEFLPISSTGHLILFGHIIDFHSDGGRVFEVVIQLGAILAVCWLYRQKIINLIKGFFSGDVESRHFAISVLIAFFPAVIIGVLAVDFIKSVLFSPIVVAIALIVGALIIFWVESKQFEHKTDDATKITFKQALLVGLAQCVAMIPGTSRSGATIVGGMFAGLSRKAATEFSFFLAMPTMLGAATFDLIKNADVLTSDNMVNIGVGFVAAFIAALLVVKALVLFVERHTLRVFAWYRIVLGVIILIAAMFFNLSA</sequence>
<reference key="1">
    <citation type="journal article" date="2008" name="PLoS ONE">
        <title>Comparative analysis of Acinetobacters: three genomes for three lifestyles.</title>
        <authorList>
            <person name="Vallenet D."/>
            <person name="Nordmann P."/>
            <person name="Barbe V."/>
            <person name="Poirel L."/>
            <person name="Mangenot S."/>
            <person name="Bataille E."/>
            <person name="Dossat C."/>
            <person name="Gas S."/>
            <person name="Kreimeyer A."/>
            <person name="Lenoble P."/>
            <person name="Oztas S."/>
            <person name="Poulain J."/>
            <person name="Segurens B."/>
            <person name="Robert C."/>
            <person name="Abergel C."/>
            <person name="Claverie J.-M."/>
            <person name="Raoult D."/>
            <person name="Medigue C."/>
            <person name="Weissenbach J."/>
            <person name="Cruveiller S."/>
        </authorList>
    </citation>
    <scope>NUCLEOTIDE SEQUENCE [LARGE SCALE GENOMIC DNA]</scope>
    <source>
        <strain>SDF</strain>
    </source>
</reference>
<accession>B0VS31</accession>
<gene>
    <name evidence="1" type="primary">uppP</name>
    <name type="ordered locus">ABSDF0696</name>
</gene>
<name>UPPP_ACIBS</name>
<comment type="function">
    <text evidence="1">Catalyzes the dephosphorylation of undecaprenyl diphosphate (UPP). Confers resistance to bacitracin.</text>
</comment>
<comment type="catalytic activity">
    <reaction evidence="1">
        <text>di-trans,octa-cis-undecaprenyl diphosphate + H2O = di-trans,octa-cis-undecaprenyl phosphate + phosphate + H(+)</text>
        <dbReference type="Rhea" id="RHEA:28094"/>
        <dbReference type="ChEBI" id="CHEBI:15377"/>
        <dbReference type="ChEBI" id="CHEBI:15378"/>
        <dbReference type="ChEBI" id="CHEBI:43474"/>
        <dbReference type="ChEBI" id="CHEBI:58405"/>
        <dbReference type="ChEBI" id="CHEBI:60392"/>
        <dbReference type="EC" id="3.6.1.27"/>
    </reaction>
</comment>
<comment type="subcellular location">
    <subcellularLocation>
        <location evidence="1">Cell inner membrane</location>
        <topology evidence="1">Multi-pass membrane protein</topology>
    </subcellularLocation>
</comment>
<comment type="miscellaneous">
    <text>Bacitracin is thought to be involved in the inhibition of peptidoglycan synthesis by sequestering undecaprenyl diphosphate, thereby reducing the pool of lipid carrier available.</text>
</comment>
<comment type="similarity">
    <text evidence="1">Belongs to the UppP family.</text>
</comment>
<keyword id="KW-0046">Antibiotic resistance</keyword>
<keyword id="KW-0997">Cell inner membrane</keyword>
<keyword id="KW-1003">Cell membrane</keyword>
<keyword id="KW-0133">Cell shape</keyword>
<keyword id="KW-0961">Cell wall biogenesis/degradation</keyword>
<keyword id="KW-0378">Hydrolase</keyword>
<keyword id="KW-0472">Membrane</keyword>
<keyword id="KW-0573">Peptidoglycan synthesis</keyword>
<keyword id="KW-0812">Transmembrane</keyword>
<keyword id="KW-1133">Transmembrane helix</keyword>
<dbReference type="EC" id="3.6.1.27" evidence="1"/>
<dbReference type="EMBL" id="CU468230">
    <property type="protein sequence ID" value="CAP00072.1"/>
    <property type="molecule type" value="Genomic_DNA"/>
</dbReference>
<dbReference type="SMR" id="B0VS31"/>
<dbReference type="KEGG" id="abm:ABSDF0696"/>
<dbReference type="HOGENOM" id="CLU_060296_2_0_6"/>
<dbReference type="Proteomes" id="UP000001741">
    <property type="component" value="Chromosome"/>
</dbReference>
<dbReference type="GO" id="GO:0005886">
    <property type="term" value="C:plasma membrane"/>
    <property type="evidence" value="ECO:0007669"/>
    <property type="project" value="UniProtKB-SubCell"/>
</dbReference>
<dbReference type="GO" id="GO:0050380">
    <property type="term" value="F:undecaprenyl-diphosphatase activity"/>
    <property type="evidence" value="ECO:0007669"/>
    <property type="project" value="UniProtKB-UniRule"/>
</dbReference>
<dbReference type="GO" id="GO:0071555">
    <property type="term" value="P:cell wall organization"/>
    <property type="evidence" value="ECO:0007669"/>
    <property type="project" value="UniProtKB-KW"/>
</dbReference>
<dbReference type="GO" id="GO:0009252">
    <property type="term" value="P:peptidoglycan biosynthetic process"/>
    <property type="evidence" value="ECO:0007669"/>
    <property type="project" value="UniProtKB-KW"/>
</dbReference>
<dbReference type="GO" id="GO:0008360">
    <property type="term" value="P:regulation of cell shape"/>
    <property type="evidence" value="ECO:0007669"/>
    <property type="project" value="UniProtKB-KW"/>
</dbReference>
<dbReference type="GO" id="GO:0046677">
    <property type="term" value="P:response to antibiotic"/>
    <property type="evidence" value="ECO:0007669"/>
    <property type="project" value="UniProtKB-UniRule"/>
</dbReference>
<dbReference type="HAMAP" id="MF_01006">
    <property type="entry name" value="Undec_diphosphatase"/>
    <property type="match status" value="1"/>
</dbReference>
<dbReference type="InterPro" id="IPR003824">
    <property type="entry name" value="UppP"/>
</dbReference>
<dbReference type="NCBIfam" id="NF001389">
    <property type="entry name" value="PRK00281.1-2"/>
    <property type="match status" value="1"/>
</dbReference>
<dbReference type="NCBIfam" id="NF001390">
    <property type="entry name" value="PRK00281.1-4"/>
    <property type="match status" value="1"/>
</dbReference>
<dbReference type="NCBIfam" id="TIGR00753">
    <property type="entry name" value="undec_PP_bacA"/>
    <property type="match status" value="1"/>
</dbReference>
<dbReference type="PANTHER" id="PTHR30622">
    <property type="entry name" value="UNDECAPRENYL-DIPHOSPHATASE"/>
    <property type="match status" value="1"/>
</dbReference>
<dbReference type="PANTHER" id="PTHR30622:SF3">
    <property type="entry name" value="UNDECAPRENYL-DIPHOSPHATASE"/>
    <property type="match status" value="1"/>
</dbReference>
<dbReference type="Pfam" id="PF02673">
    <property type="entry name" value="BacA"/>
    <property type="match status" value="1"/>
</dbReference>
<feature type="chain" id="PRO_1000134674" description="Undecaprenyl-diphosphatase">
    <location>
        <begin position="1"/>
        <end position="272"/>
    </location>
</feature>
<feature type="transmembrane region" description="Helical" evidence="1">
    <location>
        <begin position="4"/>
        <end position="24"/>
    </location>
</feature>
<feature type="transmembrane region" description="Helical" evidence="1">
    <location>
        <begin position="43"/>
        <end position="63"/>
    </location>
</feature>
<feature type="transmembrane region" description="Helical" evidence="1">
    <location>
        <begin position="86"/>
        <end position="106"/>
    </location>
</feature>
<feature type="transmembrane region" description="Helical" evidence="1">
    <location>
        <begin position="109"/>
        <end position="129"/>
    </location>
</feature>
<feature type="transmembrane region" description="Helical" evidence="1">
    <location>
        <begin position="145"/>
        <end position="165"/>
    </location>
</feature>
<feature type="transmembrane region" description="Helical" evidence="1">
    <location>
        <begin position="186"/>
        <end position="206"/>
    </location>
</feature>
<feature type="transmembrane region" description="Helical" evidence="1">
    <location>
        <begin position="222"/>
        <end position="242"/>
    </location>
</feature>
<feature type="transmembrane region" description="Helical" evidence="1">
    <location>
        <begin position="249"/>
        <end position="269"/>
    </location>
</feature>